<feature type="chain" id="PRO_0000218122" description="UPF0266 membrane protein YobD">
    <location>
        <begin position="1"/>
        <end position="158"/>
    </location>
</feature>
<feature type="topological domain" description="Periplasmic" evidence="2">
    <location>
        <begin position="1"/>
        <end position="5"/>
    </location>
</feature>
<feature type="transmembrane region" description="Helical" evidence="2">
    <location>
        <begin position="6"/>
        <end position="26"/>
    </location>
</feature>
<feature type="topological domain" description="Cytoplasmic" evidence="2">
    <location>
        <begin position="27"/>
        <end position="44"/>
    </location>
</feature>
<feature type="transmembrane region" description="Helical" evidence="2">
    <location>
        <begin position="45"/>
        <end position="65"/>
    </location>
</feature>
<feature type="topological domain" description="Periplasmic" evidence="2">
    <location>
        <position position="66"/>
    </location>
</feature>
<feature type="transmembrane region" description="Helical" evidence="2">
    <location>
        <begin position="67"/>
        <end position="87"/>
    </location>
</feature>
<feature type="topological domain" description="Cytoplasmic" evidence="2">
    <location>
        <begin position="88"/>
        <end position="158"/>
    </location>
</feature>
<dbReference type="EMBL" id="AE005674">
    <property type="protein sequence ID" value="AAN43009.1"/>
    <property type="molecule type" value="Genomic_DNA"/>
</dbReference>
<dbReference type="EMBL" id="AE014073">
    <property type="protein sequence ID" value="AAP16904.1"/>
    <property type="molecule type" value="Genomic_DNA"/>
</dbReference>
<dbReference type="RefSeq" id="NP_707302.1">
    <property type="nucleotide sequence ID" value="NC_004337.2"/>
</dbReference>
<dbReference type="RefSeq" id="WP_000156246.1">
    <property type="nucleotide sequence ID" value="NZ_WPGW01000062.1"/>
</dbReference>
<dbReference type="STRING" id="198214.SF1408"/>
<dbReference type="PaxDb" id="198214-SF1408"/>
<dbReference type="GeneID" id="1024400"/>
<dbReference type="KEGG" id="sfl:SF1408"/>
<dbReference type="KEGG" id="sfx:S1523"/>
<dbReference type="PATRIC" id="fig|198214.7.peg.1660"/>
<dbReference type="HOGENOM" id="CLU_133645_0_0_6"/>
<dbReference type="Proteomes" id="UP000001006">
    <property type="component" value="Chromosome"/>
</dbReference>
<dbReference type="Proteomes" id="UP000002673">
    <property type="component" value="Chromosome"/>
</dbReference>
<dbReference type="GO" id="GO:0005886">
    <property type="term" value="C:plasma membrane"/>
    <property type="evidence" value="ECO:0007669"/>
    <property type="project" value="UniProtKB-SubCell"/>
</dbReference>
<dbReference type="HAMAP" id="MF_01071">
    <property type="entry name" value="UPF0266"/>
    <property type="match status" value="1"/>
</dbReference>
<dbReference type="InterPro" id="IPR009328">
    <property type="entry name" value="DUF986"/>
</dbReference>
<dbReference type="NCBIfam" id="NF002791">
    <property type="entry name" value="PRK02913.1"/>
    <property type="match status" value="1"/>
</dbReference>
<dbReference type="Pfam" id="PF06173">
    <property type="entry name" value="DUF986"/>
    <property type="match status" value="1"/>
</dbReference>
<dbReference type="PIRSF" id="PIRSF020687">
    <property type="entry name" value="UCP020687"/>
    <property type="match status" value="1"/>
</dbReference>
<organism>
    <name type="scientific">Shigella flexneri</name>
    <dbReference type="NCBI Taxonomy" id="623"/>
    <lineage>
        <taxon>Bacteria</taxon>
        <taxon>Pseudomonadati</taxon>
        <taxon>Pseudomonadota</taxon>
        <taxon>Gammaproteobacteria</taxon>
        <taxon>Enterobacterales</taxon>
        <taxon>Enterobacteriaceae</taxon>
        <taxon>Shigella</taxon>
    </lineage>
</organism>
<proteinExistence type="inferred from homology"/>
<gene>
    <name type="primary">yobD</name>
    <name type="ordered locus">SF1408</name>
    <name type="ordered locus">S1523</name>
</gene>
<reference key="1">
    <citation type="journal article" date="2002" name="Nucleic Acids Res.">
        <title>Genome sequence of Shigella flexneri 2a: insights into pathogenicity through comparison with genomes of Escherichia coli K12 and O157.</title>
        <authorList>
            <person name="Jin Q."/>
            <person name="Yuan Z."/>
            <person name="Xu J."/>
            <person name="Wang Y."/>
            <person name="Shen Y."/>
            <person name="Lu W."/>
            <person name="Wang J."/>
            <person name="Liu H."/>
            <person name="Yang J."/>
            <person name="Yang F."/>
            <person name="Zhang X."/>
            <person name="Zhang J."/>
            <person name="Yang G."/>
            <person name="Wu H."/>
            <person name="Qu D."/>
            <person name="Dong J."/>
            <person name="Sun L."/>
            <person name="Xue Y."/>
            <person name="Zhao A."/>
            <person name="Gao Y."/>
            <person name="Zhu J."/>
            <person name="Kan B."/>
            <person name="Ding K."/>
            <person name="Chen S."/>
            <person name="Cheng H."/>
            <person name="Yao Z."/>
            <person name="He B."/>
            <person name="Chen R."/>
            <person name="Ma D."/>
            <person name="Qiang B."/>
            <person name="Wen Y."/>
            <person name="Hou Y."/>
            <person name="Yu J."/>
        </authorList>
    </citation>
    <scope>NUCLEOTIDE SEQUENCE [LARGE SCALE GENOMIC DNA]</scope>
    <source>
        <strain>301 / Serotype 2a</strain>
    </source>
</reference>
<reference key="2">
    <citation type="journal article" date="2003" name="Infect. Immun.">
        <title>Complete genome sequence and comparative genomics of Shigella flexneri serotype 2a strain 2457T.</title>
        <authorList>
            <person name="Wei J."/>
            <person name="Goldberg M.B."/>
            <person name="Burland V."/>
            <person name="Venkatesan M.M."/>
            <person name="Deng W."/>
            <person name="Fournier G."/>
            <person name="Mayhew G.F."/>
            <person name="Plunkett G. III"/>
            <person name="Rose D.J."/>
            <person name="Darling A."/>
            <person name="Mau B."/>
            <person name="Perna N.T."/>
            <person name="Payne S.M."/>
            <person name="Runyen-Janecky L.J."/>
            <person name="Zhou S."/>
            <person name="Schwartz D.C."/>
            <person name="Blattner F.R."/>
        </authorList>
    </citation>
    <scope>NUCLEOTIDE SEQUENCE [LARGE SCALE GENOMIC DNA]</scope>
    <source>
        <strain>ATCC 700930 / 2457T / Serotype 2a</strain>
    </source>
</reference>
<name>YOBD_SHIFL</name>
<evidence type="ECO:0000250" key="1"/>
<evidence type="ECO:0000255" key="2"/>
<evidence type="ECO:0000305" key="3"/>
<comment type="subcellular location">
    <subcellularLocation>
        <location evidence="1">Cell inner membrane</location>
        <topology evidence="1">Multi-pass membrane protein</topology>
    </subcellularLocation>
</comment>
<comment type="similarity">
    <text evidence="3">Belongs to the UPF0266 family.</text>
</comment>
<sequence length="158" mass="18167">MTITDLVLILFIAALLAFAIYDQFIMPRRNGPTLLAIPLLRRGRIDSVIFVGLIVILIYNNVTNHGALITTWLLSALALMGFYIFWIRIPKIIFKQKGFFFANVWIEYSRIKAMNLSEDGVLVMQLEQRRLLIRVRNIDDLEKIYKLLVSGNAANLLI</sequence>
<accession>Q83L78</accession>
<keyword id="KW-0997">Cell inner membrane</keyword>
<keyword id="KW-1003">Cell membrane</keyword>
<keyword id="KW-0472">Membrane</keyword>
<keyword id="KW-1185">Reference proteome</keyword>
<keyword id="KW-0812">Transmembrane</keyword>
<keyword id="KW-1133">Transmembrane helix</keyword>
<protein>
    <recommendedName>
        <fullName>UPF0266 membrane protein YobD</fullName>
    </recommendedName>
</protein>